<evidence type="ECO:0000255" key="1">
    <source>
        <dbReference type="HAMAP-Rule" id="MF_00009"/>
    </source>
</evidence>
<feature type="chain" id="PRO_1000089218" description="Endoribonuclease YbeY">
    <location>
        <begin position="1"/>
        <end position="165"/>
    </location>
</feature>
<feature type="binding site" evidence="1">
    <location>
        <position position="130"/>
    </location>
    <ligand>
        <name>Zn(2+)</name>
        <dbReference type="ChEBI" id="CHEBI:29105"/>
        <note>catalytic</note>
    </ligand>
</feature>
<feature type="binding site" evidence="1">
    <location>
        <position position="134"/>
    </location>
    <ligand>
        <name>Zn(2+)</name>
        <dbReference type="ChEBI" id="CHEBI:29105"/>
        <note>catalytic</note>
    </ligand>
</feature>
<feature type="binding site" evidence="1">
    <location>
        <position position="140"/>
    </location>
    <ligand>
        <name>Zn(2+)</name>
        <dbReference type="ChEBI" id="CHEBI:29105"/>
        <note>catalytic</note>
    </ligand>
</feature>
<proteinExistence type="inferred from homology"/>
<organism>
    <name type="scientific">Streptococcus pyogenes serotype M49 (strain NZ131)</name>
    <dbReference type="NCBI Taxonomy" id="471876"/>
    <lineage>
        <taxon>Bacteria</taxon>
        <taxon>Bacillati</taxon>
        <taxon>Bacillota</taxon>
        <taxon>Bacilli</taxon>
        <taxon>Lactobacillales</taxon>
        <taxon>Streptococcaceae</taxon>
        <taxon>Streptococcus</taxon>
    </lineage>
</organism>
<keyword id="KW-0963">Cytoplasm</keyword>
<keyword id="KW-0255">Endonuclease</keyword>
<keyword id="KW-0378">Hydrolase</keyword>
<keyword id="KW-0479">Metal-binding</keyword>
<keyword id="KW-0540">Nuclease</keyword>
<keyword id="KW-0690">Ribosome biogenesis</keyword>
<keyword id="KW-0698">rRNA processing</keyword>
<keyword id="KW-0862">Zinc</keyword>
<comment type="function">
    <text evidence="1">Single strand-specific metallo-endoribonuclease involved in late-stage 70S ribosome quality control and in maturation of the 3' terminus of the 16S rRNA.</text>
</comment>
<comment type="cofactor">
    <cofactor evidence="1">
        <name>Zn(2+)</name>
        <dbReference type="ChEBI" id="CHEBI:29105"/>
    </cofactor>
    <text evidence="1">Binds 1 zinc ion.</text>
</comment>
<comment type="subcellular location">
    <subcellularLocation>
        <location evidence="1">Cytoplasm</location>
    </subcellularLocation>
</comment>
<comment type="similarity">
    <text evidence="1">Belongs to the endoribonuclease YbeY family.</text>
</comment>
<protein>
    <recommendedName>
        <fullName evidence="1">Endoribonuclease YbeY</fullName>
        <ecNumber evidence="1">3.1.-.-</ecNumber>
    </recommendedName>
</protein>
<name>YBEY_STRPZ</name>
<sequence>MYIEMIDETGQVSQEIMEQTLDLLNFAAQKTGKEEKEMSVTFVTNERSHELNLEYRDTDRPTDVISLEYKPETPILFSQEDLAADPSLAEMMAEFDAYIGELFISIDKAREQSQEYGHSFEREMGFLAVHGFLHINGYDHYTLEEEKEMFTLQEEILTAYGLTRQ</sequence>
<gene>
    <name evidence="1" type="primary">ybeY</name>
    <name type="ordered locus">Spy49_0401</name>
</gene>
<dbReference type="EC" id="3.1.-.-" evidence="1"/>
<dbReference type="EMBL" id="CP000829">
    <property type="protein sequence ID" value="ACI60734.1"/>
    <property type="molecule type" value="Genomic_DNA"/>
</dbReference>
<dbReference type="SMR" id="B5XK72"/>
<dbReference type="KEGG" id="soz:Spy49_0401"/>
<dbReference type="HOGENOM" id="CLU_106710_3_0_9"/>
<dbReference type="Proteomes" id="UP000001039">
    <property type="component" value="Chromosome"/>
</dbReference>
<dbReference type="GO" id="GO:0005737">
    <property type="term" value="C:cytoplasm"/>
    <property type="evidence" value="ECO:0007669"/>
    <property type="project" value="UniProtKB-SubCell"/>
</dbReference>
<dbReference type="GO" id="GO:0004222">
    <property type="term" value="F:metalloendopeptidase activity"/>
    <property type="evidence" value="ECO:0007669"/>
    <property type="project" value="InterPro"/>
</dbReference>
<dbReference type="GO" id="GO:0004521">
    <property type="term" value="F:RNA endonuclease activity"/>
    <property type="evidence" value="ECO:0007669"/>
    <property type="project" value="UniProtKB-UniRule"/>
</dbReference>
<dbReference type="GO" id="GO:0008270">
    <property type="term" value="F:zinc ion binding"/>
    <property type="evidence" value="ECO:0007669"/>
    <property type="project" value="UniProtKB-UniRule"/>
</dbReference>
<dbReference type="GO" id="GO:0006364">
    <property type="term" value="P:rRNA processing"/>
    <property type="evidence" value="ECO:0007669"/>
    <property type="project" value="UniProtKB-UniRule"/>
</dbReference>
<dbReference type="Gene3D" id="3.40.390.30">
    <property type="entry name" value="Metalloproteases ('zincins'), catalytic domain"/>
    <property type="match status" value="1"/>
</dbReference>
<dbReference type="HAMAP" id="MF_00009">
    <property type="entry name" value="Endoribonucl_YbeY"/>
    <property type="match status" value="1"/>
</dbReference>
<dbReference type="InterPro" id="IPR023091">
    <property type="entry name" value="MetalPrtase_cat_dom_sf_prd"/>
</dbReference>
<dbReference type="InterPro" id="IPR002036">
    <property type="entry name" value="YbeY"/>
</dbReference>
<dbReference type="InterPro" id="IPR020549">
    <property type="entry name" value="YbeY_CS"/>
</dbReference>
<dbReference type="NCBIfam" id="TIGR00043">
    <property type="entry name" value="rRNA maturation RNase YbeY"/>
    <property type="match status" value="1"/>
</dbReference>
<dbReference type="PANTHER" id="PTHR46986">
    <property type="entry name" value="ENDORIBONUCLEASE YBEY, CHLOROPLASTIC"/>
    <property type="match status" value="1"/>
</dbReference>
<dbReference type="PANTHER" id="PTHR46986:SF1">
    <property type="entry name" value="ENDORIBONUCLEASE YBEY, CHLOROPLASTIC"/>
    <property type="match status" value="1"/>
</dbReference>
<dbReference type="Pfam" id="PF02130">
    <property type="entry name" value="YbeY"/>
    <property type="match status" value="1"/>
</dbReference>
<dbReference type="SUPFAM" id="SSF55486">
    <property type="entry name" value="Metalloproteases ('zincins'), catalytic domain"/>
    <property type="match status" value="1"/>
</dbReference>
<dbReference type="PROSITE" id="PS01306">
    <property type="entry name" value="UPF0054"/>
    <property type="match status" value="1"/>
</dbReference>
<reference key="1">
    <citation type="journal article" date="2008" name="J. Bacteriol.">
        <title>Genome sequence of a nephritogenic and highly transformable M49 strain of Streptococcus pyogenes.</title>
        <authorList>
            <person name="McShan W.M."/>
            <person name="Ferretti J.J."/>
            <person name="Karasawa T."/>
            <person name="Suvorov A.N."/>
            <person name="Lin S."/>
            <person name="Qin B."/>
            <person name="Jia H."/>
            <person name="Kenton S."/>
            <person name="Najar F."/>
            <person name="Wu H."/>
            <person name="Scott J."/>
            <person name="Roe B.A."/>
            <person name="Savic D.J."/>
        </authorList>
    </citation>
    <scope>NUCLEOTIDE SEQUENCE [LARGE SCALE GENOMIC DNA]</scope>
    <source>
        <strain>NZ131</strain>
    </source>
</reference>
<accession>B5XK72</accession>